<evidence type="ECO:0000255" key="1">
    <source>
        <dbReference type="HAMAP-Rule" id="MF_00227"/>
    </source>
</evidence>
<comment type="function">
    <text evidence="1">RNaseP catalyzes the removal of the 5'-leader sequence from pre-tRNA to produce the mature 5'-terminus. It can also cleave other RNA substrates such as 4.5S RNA. The protein component plays an auxiliary but essential role in vivo by binding to the 5'-leader sequence and broadening the substrate specificity of the ribozyme.</text>
</comment>
<comment type="catalytic activity">
    <reaction evidence="1">
        <text>Endonucleolytic cleavage of RNA, removing 5'-extranucleotides from tRNA precursor.</text>
        <dbReference type="EC" id="3.1.26.5"/>
    </reaction>
</comment>
<comment type="subunit">
    <text evidence="1">Consists of a catalytic RNA component (M1 or rnpB) and a protein subunit.</text>
</comment>
<comment type="similarity">
    <text evidence="1">Belongs to the RnpA family.</text>
</comment>
<accession>Q12HM6</accession>
<sequence>MTSYTFSRELRLLTPAQFKSVFSNPIKASSAEITLLAIPNIEQHPRLGLTVAKRFVKRANQRNRIKRVIRESFRLNQHDIPALDIVVLVRNGVMEMENADLNKLIEKLWRKLSRRYNG</sequence>
<protein>
    <recommendedName>
        <fullName evidence="1">Ribonuclease P protein component</fullName>
        <shortName evidence="1">RNase P protein</shortName>
        <shortName evidence="1">RNaseP protein</shortName>
        <ecNumber evidence="1">3.1.26.5</ecNumber>
    </recommendedName>
    <alternativeName>
        <fullName evidence="1">Protein C5</fullName>
    </alternativeName>
</protein>
<dbReference type="EC" id="3.1.26.5" evidence="1"/>
<dbReference type="EMBL" id="CP000302">
    <property type="protein sequence ID" value="ABE57050.1"/>
    <property type="molecule type" value="Genomic_DNA"/>
</dbReference>
<dbReference type="RefSeq" id="WP_011498188.1">
    <property type="nucleotide sequence ID" value="NC_007954.1"/>
</dbReference>
<dbReference type="SMR" id="Q12HM6"/>
<dbReference type="STRING" id="318161.Sden_3777"/>
<dbReference type="KEGG" id="sdn:Sden_3777"/>
<dbReference type="eggNOG" id="COG0594">
    <property type="taxonomic scope" value="Bacteria"/>
</dbReference>
<dbReference type="HOGENOM" id="CLU_117179_11_0_6"/>
<dbReference type="OrthoDB" id="9796422at2"/>
<dbReference type="Proteomes" id="UP000001982">
    <property type="component" value="Chromosome"/>
</dbReference>
<dbReference type="GO" id="GO:0030677">
    <property type="term" value="C:ribonuclease P complex"/>
    <property type="evidence" value="ECO:0007669"/>
    <property type="project" value="TreeGrafter"/>
</dbReference>
<dbReference type="GO" id="GO:0042781">
    <property type="term" value="F:3'-tRNA processing endoribonuclease activity"/>
    <property type="evidence" value="ECO:0007669"/>
    <property type="project" value="TreeGrafter"/>
</dbReference>
<dbReference type="GO" id="GO:0004526">
    <property type="term" value="F:ribonuclease P activity"/>
    <property type="evidence" value="ECO:0007669"/>
    <property type="project" value="UniProtKB-UniRule"/>
</dbReference>
<dbReference type="GO" id="GO:0000049">
    <property type="term" value="F:tRNA binding"/>
    <property type="evidence" value="ECO:0007669"/>
    <property type="project" value="UniProtKB-UniRule"/>
</dbReference>
<dbReference type="GO" id="GO:0001682">
    <property type="term" value="P:tRNA 5'-leader removal"/>
    <property type="evidence" value="ECO:0007669"/>
    <property type="project" value="UniProtKB-UniRule"/>
</dbReference>
<dbReference type="FunFam" id="3.30.230.10:FF:000016">
    <property type="entry name" value="Ribonuclease P protein component"/>
    <property type="match status" value="1"/>
</dbReference>
<dbReference type="Gene3D" id="3.30.230.10">
    <property type="match status" value="1"/>
</dbReference>
<dbReference type="HAMAP" id="MF_00227">
    <property type="entry name" value="RNase_P"/>
    <property type="match status" value="1"/>
</dbReference>
<dbReference type="InterPro" id="IPR020568">
    <property type="entry name" value="Ribosomal_Su5_D2-typ_SF"/>
</dbReference>
<dbReference type="InterPro" id="IPR014721">
    <property type="entry name" value="Ribsml_uS5_D2-typ_fold_subgr"/>
</dbReference>
<dbReference type="InterPro" id="IPR000100">
    <property type="entry name" value="RNase_P"/>
</dbReference>
<dbReference type="InterPro" id="IPR020539">
    <property type="entry name" value="RNase_P_CS"/>
</dbReference>
<dbReference type="NCBIfam" id="TIGR00188">
    <property type="entry name" value="rnpA"/>
    <property type="match status" value="1"/>
</dbReference>
<dbReference type="PANTHER" id="PTHR33992">
    <property type="entry name" value="RIBONUCLEASE P PROTEIN COMPONENT"/>
    <property type="match status" value="1"/>
</dbReference>
<dbReference type="PANTHER" id="PTHR33992:SF1">
    <property type="entry name" value="RIBONUCLEASE P PROTEIN COMPONENT"/>
    <property type="match status" value="1"/>
</dbReference>
<dbReference type="Pfam" id="PF00825">
    <property type="entry name" value="Ribonuclease_P"/>
    <property type="match status" value="1"/>
</dbReference>
<dbReference type="SUPFAM" id="SSF54211">
    <property type="entry name" value="Ribosomal protein S5 domain 2-like"/>
    <property type="match status" value="1"/>
</dbReference>
<dbReference type="PROSITE" id="PS00648">
    <property type="entry name" value="RIBONUCLEASE_P"/>
    <property type="match status" value="1"/>
</dbReference>
<gene>
    <name evidence="1" type="primary">rnpA</name>
    <name type="ordered locus">Sden_3777</name>
</gene>
<organism>
    <name type="scientific">Shewanella denitrificans (strain OS217 / ATCC BAA-1090 / DSM 15013)</name>
    <dbReference type="NCBI Taxonomy" id="318161"/>
    <lineage>
        <taxon>Bacteria</taxon>
        <taxon>Pseudomonadati</taxon>
        <taxon>Pseudomonadota</taxon>
        <taxon>Gammaproteobacteria</taxon>
        <taxon>Alteromonadales</taxon>
        <taxon>Shewanellaceae</taxon>
        <taxon>Shewanella</taxon>
    </lineage>
</organism>
<reference key="1">
    <citation type="submission" date="2006-03" db="EMBL/GenBank/DDBJ databases">
        <title>Complete sequence of Shewanella denitrificans OS217.</title>
        <authorList>
            <consortium name="US DOE Joint Genome Institute"/>
            <person name="Copeland A."/>
            <person name="Lucas S."/>
            <person name="Lapidus A."/>
            <person name="Barry K."/>
            <person name="Detter J.C."/>
            <person name="Glavina del Rio T."/>
            <person name="Hammon N."/>
            <person name="Israni S."/>
            <person name="Dalin E."/>
            <person name="Tice H."/>
            <person name="Pitluck S."/>
            <person name="Brettin T."/>
            <person name="Bruce D."/>
            <person name="Han C."/>
            <person name="Tapia R."/>
            <person name="Gilna P."/>
            <person name="Kiss H."/>
            <person name="Schmutz J."/>
            <person name="Larimer F."/>
            <person name="Land M."/>
            <person name="Hauser L."/>
            <person name="Kyrpides N."/>
            <person name="Lykidis A."/>
            <person name="Richardson P."/>
        </authorList>
    </citation>
    <scope>NUCLEOTIDE SEQUENCE [LARGE SCALE GENOMIC DNA]</scope>
    <source>
        <strain>OS217 / ATCC BAA-1090 / DSM 15013</strain>
    </source>
</reference>
<name>RNPA_SHEDO</name>
<feature type="chain" id="PRO_1000021458" description="Ribonuclease P protein component">
    <location>
        <begin position="1"/>
        <end position="118"/>
    </location>
</feature>
<keyword id="KW-0255">Endonuclease</keyword>
<keyword id="KW-0378">Hydrolase</keyword>
<keyword id="KW-0540">Nuclease</keyword>
<keyword id="KW-1185">Reference proteome</keyword>
<keyword id="KW-0694">RNA-binding</keyword>
<keyword id="KW-0819">tRNA processing</keyword>
<proteinExistence type="inferred from homology"/>